<accession>B5R367</accession>
<protein>
    <recommendedName>
        <fullName evidence="1">Probable [Fe-S]-dependent transcriptional repressor</fullName>
    </recommendedName>
</protein>
<gene>
    <name evidence="1" type="primary">feoC</name>
    <name type="ordered locus">SEN3333</name>
</gene>
<sequence>MASLIQVRDLLALRGRMEATQISHTLHAPQPMIDAMLNQLEIMGKAVRIPEEADGCLSGSCKSCPEGKACLREWWALR</sequence>
<proteinExistence type="inferred from homology"/>
<name>FEOC_SALEP</name>
<reference key="1">
    <citation type="journal article" date="2008" name="Genome Res.">
        <title>Comparative genome analysis of Salmonella enteritidis PT4 and Salmonella gallinarum 287/91 provides insights into evolutionary and host adaptation pathways.</title>
        <authorList>
            <person name="Thomson N.R."/>
            <person name="Clayton D.J."/>
            <person name="Windhorst D."/>
            <person name="Vernikos G."/>
            <person name="Davidson S."/>
            <person name="Churcher C."/>
            <person name="Quail M.A."/>
            <person name="Stevens M."/>
            <person name="Jones M.A."/>
            <person name="Watson M."/>
            <person name="Barron A."/>
            <person name="Layton A."/>
            <person name="Pickard D."/>
            <person name="Kingsley R.A."/>
            <person name="Bignell A."/>
            <person name="Clark L."/>
            <person name="Harris B."/>
            <person name="Ormond D."/>
            <person name="Abdellah Z."/>
            <person name="Brooks K."/>
            <person name="Cherevach I."/>
            <person name="Chillingworth T."/>
            <person name="Woodward J."/>
            <person name="Norberczak H."/>
            <person name="Lord A."/>
            <person name="Arrowsmith C."/>
            <person name="Jagels K."/>
            <person name="Moule S."/>
            <person name="Mungall K."/>
            <person name="Saunders M."/>
            <person name="Whitehead S."/>
            <person name="Chabalgoity J.A."/>
            <person name="Maskell D."/>
            <person name="Humphreys T."/>
            <person name="Roberts M."/>
            <person name="Barrow P.A."/>
            <person name="Dougan G."/>
            <person name="Parkhill J."/>
        </authorList>
    </citation>
    <scope>NUCLEOTIDE SEQUENCE [LARGE SCALE GENOMIC DNA]</scope>
    <source>
        <strain>P125109</strain>
    </source>
</reference>
<comment type="function">
    <text evidence="1">May function as a transcriptional regulator that controls feoABC expression.</text>
</comment>
<comment type="similarity">
    <text evidence="1">Belongs to the FeoC family.</text>
</comment>
<dbReference type="EMBL" id="AM933172">
    <property type="protein sequence ID" value="CAR34908.1"/>
    <property type="molecule type" value="Genomic_DNA"/>
</dbReference>
<dbReference type="RefSeq" id="WP_000157587.1">
    <property type="nucleotide sequence ID" value="NC_011294.1"/>
</dbReference>
<dbReference type="SMR" id="B5R367"/>
<dbReference type="KEGG" id="set:SEN3333"/>
<dbReference type="HOGENOM" id="CLU_189182_0_0_6"/>
<dbReference type="Proteomes" id="UP000000613">
    <property type="component" value="Chromosome"/>
</dbReference>
<dbReference type="GO" id="GO:0003677">
    <property type="term" value="F:DNA binding"/>
    <property type="evidence" value="ECO:0007669"/>
    <property type="project" value="UniProtKB-KW"/>
</dbReference>
<dbReference type="GO" id="GO:0005506">
    <property type="term" value="F:iron ion binding"/>
    <property type="evidence" value="ECO:0007669"/>
    <property type="project" value="UniProtKB-UniRule"/>
</dbReference>
<dbReference type="GO" id="GO:0051536">
    <property type="term" value="F:iron-sulfur cluster binding"/>
    <property type="evidence" value="ECO:0007669"/>
    <property type="project" value="UniProtKB-KW"/>
</dbReference>
<dbReference type="Gene3D" id="1.10.10.10">
    <property type="entry name" value="Winged helix-like DNA-binding domain superfamily/Winged helix DNA-binding domain"/>
    <property type="match status" value="1"/>
</dbReference>
<dbReference type="HAMAP" id="MF_01586">
    <property type="entry name" value="FeoC"/>
    <property type="match status" value="1"/>
</dbReference>
<dbReference type="InterPro" id="IPR023732">
    <property type="entry name" value="FeoC"/>
</dbReference>
<dbReference type="InterPro" id="IPR015102">
    <property type="entry name" value="Tscrpt_reg_HTH_FeoC"/>
</dbReference>
<dbReference type="InterPro" id="IPR036388">
    <property type="entry name" value="WH-like_DNA-bd_sf"/>
</dbReference>
<dbReference type="InterPro" id="IPR036390">
    <property type="entry name" value="WH_DNA-bd_sf"/>
</dbReference>
<dbReference type="NCBIfam" id="NF011960">
    <property type="entry name" value="PRK15431.1"/>
    <property type="match status" value="1"/>
</dbReference>
<dbReference type="Pfam" id="PF09012">
    <property type="entry name" value="FeoC"/>
    <property type="match status" value="1"/>
</dbReference>
<dbReference type="SUPFAM" id="SSF46785">
    <property type="entry name" value="Winged helix' DNA-binding domain"/>
    <property type="match status" value="1"/>
</dbReference>
<organism>
    <name type="scientific">Salmonella enteritidis PT4 (strain P125109)</name>
    <dbReference type="NCBI Taxonomy" id="550537"/>
    <lineage>
        <taxon>Bacteria</taxon>
        <taxon>Pseudomonadati</taxon>
        <taxon>Pseudomonadota</taxon>
        <taxon>Gammaproteobacteria</taxon>
        <taxon>Enterobacterales</taxon>
        <taxon>Enterobacteriaceae</taxon>
        <taxon>Salmonella</taxon>
    </lineage>
</organism>
<feature type="chain" id="PRO_1000201332" description="Probable [Fe-S]-dependent transcriptional repressor">
    <location>
        <begin position="1"/>
        <end position="78"/>
    </location>
</feature>
<feature type="binding site" evidence="1">
    <location>
        <position position="56"/>
    </location>
    <ligand>
        <name>iron-sulfur cluster</name>
        <dbReference type="ChEBI" id="CHEBI:30408"/>
    </ligand>
</feature>
<feature type="binding site" evidence="1">
    <location>
        <position position="61"/>
    </location>
    <ligand>
        <name>iron-sulfur cluster</name>
        <dbReference type="ChEBI" id="CHEBI:30408"/>
    </ligand>
</feature>
<feature type="binding site" evidence="1">
    <location>
        <position position="64"/>
    </location>
    <ligand>
        <name>iron-sulfur cluster</name>
        <dbReference type="ChEBI" id="CHEBI:30408"/>
    </ligand>
</feature>
<feature type="binding site" evidence="1">
    <location>
        <position position="70"/>
    </location>
    <ligand>
        <name>iron-sulfur cluster</name>
        <dbReference type="ChEBI" id="CHEBI:30408"/>
    </ligand>
</feature>
<evidence type="ECO:0000255" key="1">
    <source>
        <dbReference type="HAMAP-Rule" id="MF_01586"/>
    </source>
</evidence>
<keyword id="KW-0238">DNA-binding</keyword>
<keyword id="KW-0408">Iron</keyword>
<keyword id="KW-0411">Iron-sulfur</keyword>
<keyword id="KW-0479">Metal-binding</keyword>
<keyword id="KW-0678">Repressor</keyword>
<keyword id="KW-0804">Transcription</keyword>
<keyword id="KW-0805">Transcription regulation</keyword>